<name>Y1815_ARATH</name>
<dbReference type="EMBL" id="AC021044">
    <property type="protein sequence ID" value="AAF98441.1"/>
    <property type="molecule type" value="Genomic_DNA"/>
</dbReference>
<dbReference type="EMBL" id="AC069471">
    <property type="protein sequence ID" value="AAG51487.1"/>
    <property type="molecule type" value="Genomic_DNA"/>
</dbReference>
<dbReference type="EMBL" id="CP002684">
    <property type="protein sequence ID" value="AEE30925.1"/>
    <property type="molecule type" value="Genomic_DNA"/>
</dbReference>
<dbReference type="EMBL" id="CP002684">
    <property type="protein sequence ID" value="ANM59393.1"/>
    <property type="molecule type" value="Genomic_DNA"/>
</dbReference>
<dbReference type="EMBL" id="AY143794">
    <property type="protein sequence ID" value="AAN28733.1"/>
    <property type="molecule type" value="mRNA"/>
</dbReference>
<dbReference type="EMBL" id="AY126998">
    <property type="protein sequence ID" value="AAM83225.1"/>
    <property type="molecule type" value="mRNA"/>
</dbReference>
<dbReference type="EMBL" id="AY085247">
    <property type="protein sequence ID" value="AAM62479.1"/>
    <property type="molecule type" value="mRNA"/>
</dbReference>
<dbReference type="PIR" id="D86407">
    <property type="entry name" value="D86407"/>
</dbReference>
<dbReference type="RefSeq" id="NP_001321756.1">
    <property type="nucleotide sequence ID" value="NM_001332802.1"/>
</dbReference>
<dbReference type="RefSeq" id="NP_564301.1">
    <property type="nucleotide sequence ID" value="NM_102581.4"/>
</dbReference>
<dbReference type="FunCoup" id="Q9FZ89">
    <property type="interactions" value="523"/>
</dbReference>
<dbReference type="PaxDb" id="3702-AT1G28150.1"/>
<dbReference type="ProteomicsDB" id="232443"/>
<dbReference type="EnsemblPlants" id="AT1G28150.1">
    <property type="protein sequence ID" value="AT1G28150.1"/>
    <property type="gene ID" value="AT1G28150"/>
</dbReference>
<dbReference type="EnsemblPlants" id="AT1G28150.2">
    <property type="protein sequence ID" value="AT1G28150.2"/>
    <property type="gene ID" value="AT1G28150"/>
</dbReference>
<dbReference type="GeneID" id="839709"/>
<dbReference type="Gramene" id="AT1G28150.1">
    <property type="protein sequence ID" value="AT1G28150.1"/>
    <property type="gene ID" value="AT1G28150"/>
</dbReference>
<dbReference type="Gramene" id="AT1G28150.2">
    <property type="protein sequence ID" value="AT1G28150.2"/>
    <property type="gene ID" value="AT1G28150"/>
</dbReference>
<dbReference type="KEGG" id="ath:AT1G28150"/>
<dbReference type="Araport" id="AT1G28150"/>
<dbReference type="TAIR" id="AT1G28150"/>
<dbReference type="eggNOG" id="ENOG502S7EQ">
    <property type="taxonomic scope" value="Eukaryota"/>
</dbReference>
<dbReference type="HOGENOM" id="CLU_155511_1_0_1"/>
<dbReference type="InParanoid" id="Q9FZ89"/>
<dbReference type="OMA" id="NELWFRP"/>
<dbReference type="OrthoDB" id="784484at2759"/>
<dbReference type="PhylomeDB" id="Q9FZ89"/>
<dbReference type="PRO" id="PR:Q9FZ89"/>
<dbReference type="Proteomes" id="UP000006548">
    <property type="component" value="Chromosome 1"/>
</dbReference>
<dbReference type="ExpressionAtlas" id="Q9FZ89">
    <property type="expression patterns" value="baseline and differential"/>
</dbReference>
<dbReference type="GO" id="GO:0010287">
    <property type="term" value="C:plastoglobule"/>
    <property type="evidence" value="ECO:0007005"/>
    <property type="project" value="TAIR"/>
</dbReference>
<dbReference type="InterPro" id="IPR040278">
    <property type="entry name" value="UPF0426"/>
</dbReference>
<dbReference type="PANTHER" id="PTHR35996:SF1">
    <property type="entry name" value="OS04G0528100 PROTEIN"/>
    <property type="match status" value="1"/>
</dbReference>
<dbReference type="PANTHER" id="PTHR35996">
    <property type="entry name" value="OSJNBA0038O10.25 PROTEIN"/>
    <property type="match status" value="1"/>
</dbReference>
<comment type="subcellular location">
    <subcellularLocation>
        <location evidence="3">Plastid</location>
        <location evidence="3">Chloroplast</location>
        <location evidence="3">Plastoglobule</location>
    </subcellularLocation>
</comment>
<comment type="similarity">
    <text evidence="4">Belongs to the UPF0426 family.</text>
</comment>
<accession>Q9FZ89</accession>
<accession>Q8LET5</accession>
<sequence length="123" mass="13582">MGFVLICTCPPSSGVVVSQLHHHQFSAGVKSNELWFRPTRRTLISKSSCFNLPQEPILSEALKEPIAFLGGMFAGLLRLDLNEEPLKDWVTRTVEASGITEEEVDADGVVSNDEDSPQQIEIE</sequence>
<reference key="1">
    <citation type="journal article" date="2000" name="Nature">
        <title>Sequence and analysis of chromosome 1 of the plant Arabidopsis thaliana.</title>
        <authorList>
            <person name="Theologis A."/>
            <person name="Ecker J.R."/>
            <person name="Palm C.J."/>
            <person name="Federspiel N.A."/>
            <person name="Kaul S."/>
            <person name="White O."/>
            <person name="Alonso J."/>
            <person name="Altafi H."/>
            <person name="Araujo R."/>
            <person name="Bowman C.L."/>
            <person name="Brooks S.Y."/>
            <person name="Buehler E."/>
            <person name="Chan A."/>
            <person name="Chao Q."/>
            <person name="Chen H."/>
            <person name="Cheuk R.F."/>
            <person name="Chin C.W."/>
            <person name="Chung M.K."/>
            <person name="Conn L."/>
            <person name="Conway A.B."/>
            <person name="Conway A.R."/>
            <person name="Creasy T.H."/>
            <person name="Dewar K."/>
            <person name="Dunn P."/>
            <person name="Etgu P."/>
            <person name="Feldblyum T.V."/>
            <person name="Feng J.-D."/>
            <person name="Fong B."/>
            <person name="Fujii C.Y."/>
            <person name="Gill J.E."/>
            <person name="Goldsmith A.D."/>
            <person name="Haas B."/>
            <person name="Hansen N.F."/>
            <person name="Hughes B."/>
            <person name="Huizar L."/>
            <person name="Hunter J.L."/>
            <person name="Jenkins J."/>
            <person name="Johnson-Hopson C."/>
            <person name="Khan S."/>
            <person name="Khaykin E."/>
            <person name="Kim C.J."/>
            <person name="Koo H.L."/>
            <person name="Kremenetskaia I."/>
            <person name="Kurtz D.B."/>
            <person name="Kwan A."/>
            <person name="Lam B."/>
            <person name="Langin-Hooper S."/>
            <person name="Lee A."/>
            <person name="Lee J.M."/>
            <person name="Lenz C.A."/>
            <person name="Li J.H."/>
            <person name="Li Y.-P."/>
            <person name="Lin X."/>
            <person name="Liu S.X."/>
            <person name="Liu Z.A."/>
            <person name="Luros J.S."/>
            <person name="Maiti R."/>
            <person name="Marziali A."/>
            <person name="Militscher J."/>
            <person name="Miranda M."/>
            <person name="Nguyen M."/>
            <person name="Nierman W.C."/>
            <person name="Osborne B.I."/>
            <person name="Pai G."/>
            <person name="Peterson J."/>
            <person name="Pham P.K."/>
            <person name="Rizzo M."/>
            <person name="Rooney T."/>
            <person name="Rowley D."/>
            <person name="Sakano H."/>
            <person name="Salzberg S.L."/>
            <person name="Schwartz J.R."/>
            <person name="Shinn P."/>
            <person name="Southwick A.M."/>
            <person name="Sun H."/>
            <person name="Tallon L.J."/>
            <person name="Tambunga G."/>
            <person name="Toriumi M.J."/>
            <person name="Town C.D."/>
            <person name="Utterback T."/>
            <person name="Van Aken S."/>
            <person name="Vaysberg M."/>
            <person name="Vysotskaia V.S."/>
            <person name="Walker M."/>
            <person name="Wu D."/>
            <person name="Yu G."/>
            <person name="Fraser C.M."/>
            <person name="Venter J.C."/>
            <person name="Davis R.W."/>
        </authorList>
    </citation>
    <scope>NUCLEOTIDE SEQUENCE [LARGE SCALE GENOMIC DNA]</scope>
    <source>
        <strain>cv. Columbia</strain>
    </source>
</reference>
<reference key="2">
    <citation type="journal article" date="2017" name="Plant J.">
        <title>Araport11: a complete reannotation of the Arabidopsis thaliana reference genome.</title>
        <authorList>
            <person name="Cheng C.Y."/>
            <person name="Krishnakumar V."/>
            <person name="Chan A.P."/>
            <person name="Thibaud-Nissen F."/>
            <person name="Schobel S."/>
            <person name="Town C.D."/>
        </authorList>
    </citation>
    <scope>GENOME REANNOTATION</scope>
    <source>
        <strain>cv. Columbia</strain>
    </source>
</reference>
<reference key="3">
    <citation type="journal article" date="2003" name="Science">
        <title>Empirical analysis of transcriptional activity in the Arabidopsis genome.</title>
        <authorList>
            <person name="Yamada K."/>
            <person name="Lim J."/>
            <person name="Dale J.M."/>
            <person name="Chen H."/>
            <person name="Shinn P."/>
            <person name="Palm C.J."/>
            <person name="Southwick A.M."/>
            <person name="Wu H.C."/>
            <person name="Kim C.J."/>
            <person name="Nguyen M."/>
            <person name="Pham P.K."/>
            <person name="Cheuk R.F."/>
            <person name="Karlin-Newmann G."/>
            <person name="Liu S.X."/>
            <person name="Lam B."/>
            <person name="Sakano H."/>
            <person name="Wu T."/>
            <person name="Yu G."/>
            <person name="Miranda M."/>
            <person name="Quach H.L."/>
            <person name="Tripp M."/>
            <person name="Chang C.H."/>
            <person name="Lee J.M."/>
            <person name="Toriumi M.J."/>
            <person name="Chan M.M."/>
            <person name="Tang C.C."/>
            <person name="Onodera C.S."/>
            <person name="Deng J.M."/>
            <person name="Akiyama K."/>
            <person name="Ansari Y."/>
            <person name="Arakawa T."/>
            <person name="Banh J."/>
            <person name="Banno F."/>
            <person name="Bowser L."/>
            <person name="Brooks S.Y."/>
            <person name="Carninci P."/>
            <person name="Chao Q."/>
            <person name="Choy N."/>
            <person name="Enju A."/>
            <person name="Goldsmith A.D."/>
            <person name="Gurjal M."/>
            <person name="Hansen N.F."/>
            <person name="Hayashizaki Y."/>
            <person name="Johnson-Hopson C."/>
            <person name="Hsuan V.W."/>
            <person name="Iida K."/>
            <person name="Karnes M."/>
            <person name="Khan S."/>
            <person name="Koesema E."/>
            <person name="Ishida J."/>
            <person name="Jiang P.X."/>
            <person name="Jones T."/>
            <person name="Kawai J."/>
            <person name="Kamiya A."/>
            <person name="Meyers C."/>
            <person name="Nakajima M."/>
            <person name="Narusaka M."/>
            <person name="Seki M."/>
            <person name="Sakurai T."/>
            <person name="Satou M."/>
            <person name="Tamse R."/>
            <person name="Vaysberg M."/>
            <person name="Wallender E.K."/>
            <person name="Wong C."/>
            <person name="Yamamura Y."/>
            <person name="Yuan S."/>
            <person name="Shinozaki K."/>
            <person name="Davis R.W."/>
            <person name="Theologis A."/>
            <person name="Ecker J.R."/>
        </authorList>
    </citation>
    <scope>NUCLEOTIDE SEQUENCE [LARGE SCALE MRNA]</scope>
    <source>
        <strain>cv. Columbia</strain>
    </source>
</reference>
<reference key="4">
    <citation type="submission" date="2002-03" db="EMBL/GenBank/DDBJ databases">
        <title>Full-length cDNA from Arabidopsis thaliana.</title>
        <authorList>
            <person name="Brover V.V."/>
            <person name="Troukhan M.E."/>
            <person name="Alexandrov N.A."/>
            <person name="Lu Y.-P."/>
            <person name="Flavell R.B."/>
            <person name="Feldmann K.A."/>
        </authorList>
    </citation>
    <scope>NUCLEOTIDE SEQUENCE [LARGE SCALE MRNA]</scope>
</reference>
<reference key="5">
    <citation type="journal article" date="2006" name="Plant Physiol.">
        <title>Protein profiling of plastoglobules in chloroplasts and chromoplasts. A surprising site for differential accumulation of metabolic enzymes.</title>
        <authorList>
            <person name="Ytterberg A.J."/>
            <person name="Peltier J.-B."/>
            <person name="van Wijk K.J."/>
        </authorList>
    </citation>
    <scope>IDENTIFICATION BY MASS SPECTROMETRY</scope>
    <scope>SUBCELLULAR LOCATION [LARGE SCALE ANALYSIS]</scope>
    <source>
        <strain>cv. Columbia</strain>
    </source>
</reference>
<feature type="transit peptide" description="Chloroplast" evidence="1">
    <location>
        <begin position="1"/>
        <end position="26"/>
    </location>
</feature>
<feature type="chain" id="PRO_0000286546" description="UPF0426 protein At1g28150, chloroplastic">
    <location>
        <begin position="27"/>
        <end position="123"/>
    </location>
</feature>
<feature type="region of interest" description="Disordered" evidence="2">
    <location>
        <begin position="97"/>
        <end position="123"/>
    </location>
</feature>
<feature type="compositionally biased region" description="Acidic residues" evidence="2">
    <location>
        <begin position="100"/>
        <end position="123"/>
    </location>
</feature>
<feature type="sequence conflict" description="In Ref. 4; AAM62479." evidence="4" ref="4">
    <original>A</original>
    <variation>S</variation>
    <location>
        <position position="61"/>
    </location>
</feature>
<organism>
    <name type="scientific">Arabidopsis thaliana</name>
    <name type="common">Mouse-ear cress</name>
    <dbReference type="NCBI Taxonomy" id="3702"/>
    <lineage>
        <taxon>Eukaryota</taxon>
        <taxon>Viridiplantae</taxon>
        <taxon>Streptophyta</taxon>
        <taxon>Embryophyta</taxon>
        <taxon>Tracheophyta</taxon>
        <taxon>Spermatophyta</taxon>
        <taxon>Magnoliopsida</taxon>
        <taxon>eudicotyledons</taxon>
        <taxon>Gunneridae</taxon>
        <taxon>Pentapetalae</taxon>
        <taxon>rosids</taxon>
        <taxon>malvids</taxon>
        <taxon>Brassicales</taxon>
        <taxon>Brassicaceae</taxon>
        <taxon>Camelineae</taxon>
        <taxon>Arabidopsis</taxon>
    </lineage>
</organism>
<protein>
    <recommendedName>
        <fullName>UPF0426 protein At1g28150, chloroplastic</fullName>
    </recommendedName>
</protein>
<gene>
    <name type="ordered locus">At1g28150</name>
    <name type="ORF">F13K9.24</name>
    <name type="ORF">F3H9.19</name>
</gene>
<evidence type="ECO:0000255" key="1"/>
<evidence type="ECO:0000256" key="2">
    <source>
        <dbReference type="SAM" id="MobiDB-lite"/>
    </source>
</evidence>
<evidence type="ECO:0000269" key="3">
    <source>
    </source>
</evidence>
<evidence type="ECO:0000305" key="4"/>
<proteinExistence type="evidence at protein level"/>
<keyword id="KW-0150">Chloroplast</keyword>
<keyword id="KW-0934">Plastid</keyword>
<keyword id="KW-1185">Reference proteome</keyword>
<keyword id="KW-0809">Transit peptide</keyword>